<proteinExistence type="inferred from homology"/>
<name>RS11_RHOPB</name>
<accession>Q211H1</accession>
<protein>
    <recommendedName>
        <fullName evidence="1">Small ribosomal subunit protein uS11</fullName>
    </recommendedName>
    <alternativeName>
        <fullName evidence="2">30S ribosomal protein S11</fullName>
    </alternativeName>
</protein>
<sequence length="129" mass="13910">MGKEATRVRRRERKNIASGIAHVNSSFNNTTITITDAQGNTIAWSSAGTMGFKGSRKSTPYAAQVAAEDVSKKAQEHGMRTLEVEVAGPGSGRESALRALQAAGFTVTSIRDVTTIPHNGCRPRKRRRV</sequence>
<organism>
    <name type="scientific">Rhodopseudomonas palustris (strain BisB18)</name>
    <dbReference type="NCBI Taxonomy" id="316056"/>
    <lineage>
        <taxon>Bacteria</taxon>
        <taxon>Pseudomonadati</taxon>
        <taxon>Pseudomonadota</taxon>
        <taxon>Alphaproteobacteria</taxon>
        <taxon>Hyphomicrobiales</taxon>
        <taxon>Nitrobacteraceae</taxon>
        <taxon>Rhodopseudomonas</taxon>
    </lineage>
</organism>
<comment type="function">
    <text evidence="1">Located on the platform of the 30S subunit, it bridges several disparate RNA helices of the 16S rRNA. Forms part of the Shine-Dalgarno cleft in the 70S ribosome.</text>
</comment>
<comment type="subunit">
    <text evidence="1">Part of the 30S ribosomal subunit. Interacts with proteins S7 and S18. Binds to IF-3.</text>
</comment>
<comment type="similarity">
    <text evidence="1">Belongs to the universal ribosomal protein uS11 family.</text>
</comment>
<evidence type="ECO:0000255" key="1">
    <source>
        <dbReference type="HAMAP-Rule" id="MF_01310"/>
    </source>
</evidence>
<evidence type="ECO:0000305" key="2"/>
<gene>
    <name evidence="1" type="primary">rpsK</name>
    <name type="ordered locus">RPC_3425</name>
</gene>
<feature type="chain" id="PRO_0000294839" description="Small ribosomal subunit protein uS11">
    <location>
        <begin position="1"/>
        <end position="129"/>
    </location>
</feature>
<keyword id="KW-0687">Ribonucleoprotein</keyword>
<keyword id="KW-0689">Ribosomal protein</keyword>
<keyword id="KW-0694">RNA-binding</keyword>
<keyword id="KW-0699">rRNA-binding</keyword>
<reference key="1">
    <citation type="submission" date="2006-03" db="EMBL/GenBank/DDBJ databases">
        <title>Complete sequence of Rhodopseudomonas palustris BisB18.</title>
        <authorList>
            <consortium name="US DOE Joint Genome Institute"/>
            <person name="Copeland A."/>
            <person name="Lucas S."/>
            <person name="Lapidus A."/>
            <person name="Barry K."/>
            <person name="Detter J.C."/>
            <person name="Glavina del Rio T."/>
            <person name="Hammon N."/>
            <person name="Israni S."/>
            <person name="Dalin E."/>
            <person name="Tice H."/>
            <person name="Pitluck S."/>
            <person name="Chain P."/>
            <person name="Malfatti S."/>
            <person name="Shin M."/>
            <person name="Vergez L."/>
            <person name="Schmutz J."/>
            <person name="Larimer F."/>
            <person name="Land M."/>
            <person name="Hauser L."/>
            <person name="Pelletier D.A."/>
            <person name="Kyrpides N."/>
            <person name="Anderson I."/>
            <person name="Oda Y."/>
            <person name="Harwood C.S."/>
            <person name="Richardson P."/>
        </authorList>
    </citation>
    <scope>NUCLEOTIDE SEQUENCE [LARGE SCALE GENOMIC DNA]</scope>
    <source>
        <strain>BisB18</strain>
    </source>
</reference>
<dbReference type="EMBL" id="CP000301">
    <property type="protein sequence ID" value="ABD88965.1"/>
    <property type="molecule type" value="Genomic_DNA"/>
</dbReference>
<dbReference type="SMR" id="Q211H1"/>
<dbReference type="STRING" id="316056.RPC_3425"/>
<dbReference type="KEGG" id="rpc:RPC_3425"/>
<dbReference type="eggNOG" id="COG0100">
    <property type="taxonomic scope" value="Bacteria"/>
</dbReference>
<dbReference type="HOGENOM" id="CLU_072439_5_0_5"/>
<dbReference type="OrthoDB" id="9806415at2"/>
<dbReference type="GO" id="GO:1990904">
    <property type="term" value="C:ribonucleoprotein complex"/>
    <property type="evidence" value="ECO:0007669"/>
    <property type="project" value="UniProtKB-KW"/>
</dbReference>
<dbReference type="GO" id="GO:0005840">
    <property type="term" value="C:ribosome"/>
    <property type="evidence" value="ECO:0007669"/>
    <property type="project" value="UniProtKB-KW"/>
</dbReference>
<dbReference type="GO" id="GO:0019843">
    <property type="term" value="F:rRNA binding"/>
    <property type="evidence" value="ECO:0007669"/>
    <property type="project" value="UniProtKB-UniRule"/>
</dbReference>
<dbReference type="GO" id="GO:0003735">
    <property type="term" value="F:structural constituent of ribosome"/>
    <property type="evidence" value="ECO:0007669"/>
    <property type="project" value="InterPro"/>
</dbReference>
<dbReference type="GO" id="GO:0006412">
    <property type="term" value="P:translation"/>
    <property type="evidence" value="ECO:0007669"/>
    <property type="project" value="UniProtKB-UniRule"/>
</dbReference>
<dbReference type="FunFam" id="3.30.420.80:FF:000001">
    <property type="entry name" value="30S ribosomal protein S11"/>
    <property type="match status" value="1"/>
</dbReference>
<dbReference type="Gene3D" id="3.30.420.80">
    <property type="entry name" value="Ribosomal protein S11"/>
    <property type="match status" value="1"/>
</dbReference>
<dbReference type="HAMAP" id="MF_01310">
    <property type="entry name" value="Ribosomal_uS11"/>
    <property type="match status" value="1"/>
</dbReference>
<dbReference type="InterPro" id="IPR001971">
    <property type="entry name" value="Ribosomal_uS11"/>
</dbReference>
<dbReference type="InterPro" id="IPR019981">
    <property type="entry name" value="Ribosomal_uS11_bac-type"/>
</dbReference>
<dbReference type="InterPro" id="IPR036967">
    <property type="entry name" value="Ribosomal_uS11_sf"/>
</dbReference>
<dbReference type="NCBIfam" id="NF003698">
    <property type="entry name" value="PRK05309.1"/>
    <property type="match status" value="1"/>
</dbReference>
<dbReference type="NCBIfam" id="TIGR03632">
    <property type="entry name" value="uS11_bact"/>
    <property type="match status" value="1"/>
</dbReference>
<dbReference type="PANTHER" id="PTHR11759">
    <property type="entry name" value="40S RIBOSOMAL PROTEIN S14/30S RIBOSOMAL PROTEIN S11"/>
    <property type="match status" value="1"/>
</dbReference>
<dbReference type="Pfam" id="PF00411">
    <property type="entry name" value="Ribosomal_S11"/>
    <property type="match status" value="1"/>
</dbReference>
<dbReference type="PIRSF" id="PIRSF002131">
    <property type="entry name" value="Ribosomal_S11"/>
    <property type="match status" value="1"/>
</dbReference>
<dbReference type="SUPFAM" id="SSF53137">
    <property type="entry name" value="Translational machinery components"/>
    <property type="match status" value="1"/>
</dbReference>